<evidence type="ECO:0000255" key="1">
    <source>
        <dbReference type="HAMAP-Rule" id="MF_01309"/>
    </source>
</evidence>
<evidence type="ECO:0000305" key="2"/>
<keyword id="KW-1185">Reference proteome</keyword>
<keyword id="KW-0687">Ribonucleoprotein</keyword>
<keyword id="KW-0689">Ribosomal protein</keyword>
<keyword id="KW-0694">RNA-binding</keyword>
<keyword id="KW-0699">rRNA-binding</keyword>
<sequence length="224" mass="25071">MGQKINPNGFRLGVIRDWESKWYADKGYKETLKEDLQIRKFISEKLKDASVSTVEIERAANRINISIHTAKPGMVIGKGGSEVEALRKQLNALTGKQVHINIVEIKKPDLDAELVADSIARQLEARIAFRRAMRQATQRAMLAGAKGIKVQTSGRLNGADMARREWHTEGRVPLQTLRADIDYAWVNAFTTYGEIGVQVWINRGEILPTRKNKPASKPAKGGNR</sequence>
<accession>Q5FM84</accession>
<proteinExistence type="inferred from homology"/>
<comment type="function">
    <text evidence="1">Binds the lower part of the 30S subunit head. Binds mRNA in the 70S ribosome, positioning it for translation.</text>
</comment>
<comment type="subunit">
    <text evidence="1">Part of the 30S ribosomal subunit. Forms a tight complex with proteins S10 and S14.</text>
</comment>
<comment type="similarity">
    <text evidence="1">Belongs to the universal ribosomal protein uS3 family.</text>
</comment>
<organism>
    <name type="scientific">Lactobacillus acidophilus (strain ATCC 700396 / NCK56 / N2 / NCFM)</name>
    <dbReference type="NCBI Taxonomy" id="272621"/>
    <lineage>
        <taxon>Bacteria</taxon>
        <taxon>Bacillati</taxon>
        <taxon>Bacillota</taxon>
        <taxon>Bacilli</taxon>
        <taxon>Lactobacillales</taxon>
        <taxon>Lactobacillaceae</taxon>
        <taxon>Lactobacillus</taxon>
    </lineage>
</organism>
<gene>
    <name evidence="1" type="primary">rpsC</name>
    <name type="ordered locus">LBA0297</name>
</gene>
<reference key="1">
    <citation type="journal article" date="2005" name="Proc. Natl. Acad. Sci. U.S.A.">
        <title>Complete genome sequence of the probiotic lactic acid bacterium Lactobacillus acidophilus NCFM.</title>
        <authorList>
            <person name="Altermann E."/>
            <person name="Russell W.M."/>
            <person name="Azcarate-Peril M.A."/>
            <person name="Barrangou R."/>
            <person name="Buck B.L."/>
            <person name="McAuliffe O."/>
            <person name="Souther N."/>
            <person name="Dobson A."/>
            <person name="Duong T."/>
            <person name="Callanan M."/>
            <person name="Lick S."/>
            <person name="Hamrick A."/>
            <person name="Cano R."/>
            <person name="Klaenhammer T.R."/>
        </authorList>
    </citation>
    <scope>NUCLEOTIDE SEQUENCE [LARGE SCALE GENOMIC DNA]</scope>
    <source>
        <strain>ATCC 700396 / NCK56 / N2 / NCFM</strain>
    </source>
</reference>
<dbReference type="EMBL" id="CP000033">
    <property type="protein sequence ID" value="AAV42190.1"/>
    <property type="molecule type" value="Genomic_DNA"/>
</dbReference>
<dbReference type="RefSeq" id="WP_011254113.1">
    <property type="nucleotide sequence ID" value="NC_006814.3"/>
</dbReference>
<dbReference type="RefSeq" id="YP_193221.1">
    <property type="nucleotide sequence ID" value="NC_006814.3"/>
</dbReference>
<dbReference type="SMR" id="Q5FM84"/>
<dbReference type="STRING" id="272621.LBA0297"/>
<dbReference type="KEGG" id="lac:LBA0297"/>
<dbReference type="PATRIC" id="fig|272621.13.peg.283"/>
<dbReference type="eggNOG" id="COG0092">
    <property type="taxonomic scope" value="Bacteria"/>
</dbReference>
<dbReference type="HOGENOM" id="CLU_058591_0_2_9"/>
<dbReference type="OrthoDB" id="9806396at2"/>
<dbReference type="BioCyc" id="LACI272621:G1G49-291-MONOMER"/>
<dbReference type="Proteomes" id="UP000006381">
    <property type="component" value="Chromosome"/>
</dbReference>
<dbReference type="GO" id="GO:0022627">
    <property type="term" value="C:cytosolic small ribosomal subunit"/>
    <property type="evidence" value="ECO:0007669"/>
    <property type="project" value="TreeGrafter"/>
</dbReference>
<dbReference type="GO" id="GO:0003729">
    <property type="term" value="F:mRNA binding"/>
    <property type="evidence" value="ECO:0007669"/>
    <property type="project" value="UniProtKB-UniRule"/>
</dbReference>
<dbReference type="GO" id="GO:0019843">
    <property type="term" value="F:rRNA binding"/>
    <property type="evidence" value="ECO:0007669"/>
    <property type="project" value="UniProtKB-UniRule"/>
</dbReference>
<dbReference type="GO" id="GO:0003735">
    <property type="term" value="F:structural constituent of ribosome"/>
    <property type="evidence" value="ECO:0007669"/>
    <property type="project" value="InterPro"/>
</dbReference>
<dbReference type="GO" id="GO:0006412">
    <property type="term" value="P:translation"/>
    <property type="evidence" value="ECO:0007669"/>
    <property type="project" value="UniProtKB-UniRule"/>
</dbReference>
<dbReference type="CDD" id="cd02412">
    <property type="entry name" value="KH-II_30S_S3"/>
    <property type="match status" value="1"/>
</dbReference>
<dbReference type="FunFam" id="3.30.300.20:FF:000001">
    <property type="entry name" value="30S ribosomal protein S3"/>
    <property type="match status" value="1"/>
</dbReference>
<dbReference type="Gene3D" id="3.30.300.20">
    <property type="match status" value="1"/>
</dbReference>
<dbReference type="Gene3D" id="3.30.1140.32">
    <property type="entry name" value="Ribosomal protein S3, C-terminal domain"/>
    <property type="match status" value="1"/>
</dbReference>
<dbReference type="HAMAP" id="MF_01309_B">
    <property type="entry name" value="Ribosomal_uS3_B"/>
    <property type="match status" value="1"/>
</dbReference>
<dbReference type="InterPro" id="IPR004087">
    <property type="entry name" value="KH_dom"/>
</dbReference>
<dbReference type="InterPro" id="IPR015946">
    <property type="entry name" value="KH_dom-like_a/b"/>
</dbReference>
<dbReference type="InterPro" id="IPR004044">
    <property type="entry name" value="KH_dom_type_2"/>
</dbReference>
<dbReference type="InterPro" id="IPR009019">
    <property type="entry name" value="KH_sf_prok-type"/>
</dbReference>
<dbReference type="InterPro" id="IPR036419">
    <property type="entry name" value="Ribosomal_S3_C_sf"/>
</dbReference>
<dbReference type="InterPro" id="IPR005704">
    <property type="entry name" value="Ribosomal_uS3_bac-typ"/>
</dbReference>
<dbReference type="InterPro" id="IPR001351">
    <property type="entry name" value="Ribosomal_uS3_C"/>
</dbReference>
<dbReference type="InterPro" id="IPR018280">
    <property type="entry name" value="Ribosomal_uS3_CS"/>
</dbReference>
<dbReference type="NCBIfam" id="TIGR01009">
    <property type="entry name" value="rpsC_bact"/>
    <property type="match status" value="1"/>
</dbReference>
<dbReference type="PANTHER" id="PTHR11760">
    <property type="entry name" value="30S/40S RIBOSOMAL PROTEIN S3"/>
    <property type="match status" value="1"/>
</dbReference>
<dbReference type="PANTHER" id="PTHR11760:SF19">
    <property type="entry name" value="SMALL RIBOSOMAL SUBUNIT PROTEIN US3C"/>
    <property type="match status" value="1"/>
</dbReference>
<dbReference type="Pfam" id="PF07650">
    <property type="entry name" value="KH_2"/>
    <property type="match status" value="1"/>
</dbReference>
<dbReference type="Pfam" id="PF00189">
    <property type="entry name" value="Ribosomal_S3_C"/>
    <property type="match status" value="1"/>
</dbReference>
<dbReference type="SMART" id="SM00322">
    <property type="entry name" value="KH"/>
    <property type="match status" value="1"/>
</dbReference>
<dbReference type="SUPFAM" id="SSF54814">
    <property type="entry name" value="Prokaryotic type KH domain (KH-domain type II)"/>
    <property type="match status" value="1"/>
</dbReference>
<dbReference type="SUPFAM" id="SSF54821">
    <property type="entry name" value="Ribosomal protein S3 C-terminal domain"/>
    <property type="match status" value="1"/>
</dbReference>
<dbReference type="PROSITE" id="PS50823">
    <property type="entry name" value="KH_TYPE_2"/>
    <property type="match status" value="1"/>
</dbReference>
<dbReference type="PROSITE" id="PS00548">
    <property type="entry name" value="RIBOSOMAL_S3"/>
    <property type="match status" value="1"/>
</dbReference>
<feature type="chain" id="PRO_0000230702" description="Small ribosomal subunit protein uS3">
    <location>
        <begin position="1"/>
        <end position="224"/>
    </location>
</feature>
<feature type="domain" description="KH type-2" evidence="1">
    <location>
        <begin position="38"/>
        <end position="106"/>
    </location>
</feature>
<name>RS3_LACAC</name>
<protein>
    <recommendedName>
        <fullName evidence="1">Small ribosomal subunit protein uS3</fullName>
    </recommendedName>
    <alternativeName>
        <fullName evidence="2">30S ribosomal protein S3</fullName>
    </alternativeName>
</protein>